<name>DNSL1_RAT</name>
<proteinExistence type="evidence at transcript level"/>
<evidence type="ECO:0000250" key="1"/>
<evidence type="ECO:0000255" key="2"/>
<evidence type="ECO:0000305" key="3"/>
<reference key="1">
    <citation type="journal article" date="2005" name="Biochem. J.">
        <title>Physical and biochemical properties of mammalian DNase X proteins: non-AUG translation initiation of porcine and bovine mRNAs for DNase X.</title>
        <authorList>
            <person name="Shiokawa D."/>
            <person name="Shika Y."/>
            <person name="Saito K."/>
            <person name="Yamazaki K."/>
            <person name="Tanuma S."/>
        </authorList>
    </citation>
    <scope>NUCLEOTIDE SEQUENCE [MRNA]</scope>
    <source>
        <strain>Sprague-Dawley</strain>
    </source>
</reference>
<gene>
    <name type="primary">Dnase1l1</name>
</gene>
<comment type="subcellular location">
    <subcellularLocation>
        <location evidence="1">Endoplasmic reticulum</location>
    </subcellularLocation>
</comment>
<comment type="similarity">
    <text evidence="3">Belongs to the DNase I family.</text>
</comment>
<dbReference type="EC" id="3.1.21.-"/>
<dbReference type="EMBL" id="DQ116785">
    <property type="protein sequence ID" value="AAZ94278.1"/>
    <property type="molecule type" value="mRNA"/>
</dbReference>
<dbReference type="RefSeq" id="NP_001014245.2">
    <property type="nucleotide sequence ID" value="NM_001014223.3"/>
</dbReference>
<dbReference type="SMR" id="Q2QDE7"/>
<dbReference type="FunCoup" id="Q2QDE7">
    <property type="interactions" value="93"/>
</dbReference>
<dbReference type="STRING" id="10116.ENSRNOP00000073157"/>
<dbReference type="GlyCosmos" id="Q2QDE7">
    <property type="glycosylation" value="3 sites, No reported glycans"/>
</dbReference>
<dbReference type="GlyGen" id="Q2QDE7">
    <property type="glycosylation" value="3 sites"/>
</dbReference>
<dbReference type="PhosphoSitePlus" id="Q2QDE7"/>
<dbReference type="PaxDb" id="10116-ENSRNOP00000053125"/>
<dbReference type="Ensembl" id="ENSRNOT00000083203.2">
    <property type="protein sequence ID" value="ENSRNOP00000073157.1"/>
    <property type="gene ID" value="ENSRNOG00000055641.2"/>
</dbReference>
<dbReference type="GeneID" id="363522"/>
<dbReference type="KEGG" id="rno:363522"/>
<dbReference type="AGR" id="RGD:1359588"/>
<dbReference type="CTD" id="1774"/>
<dbReference type="RGD" id="1359588">
    <property type="gene designation" value="Dnase1l1"/>
</dbReference>
<dbReference type="eggNOG" id="ENOG502QQFT">
    <property type="taxonomic scope" value="Eukaryota"/>
</dbReference>
<dbReference type="GeneTree" id="ENSGT00950000182846"/>
<dbReference type="HOGENOM" id="CLU_043335_1_0_1"/>
<dbReference type="InParanoid" id="Q2QDE7"/>
<dbReference type="OMA" id="LNFYQYE"/>
<dbReference type="OrthoDB" id="10061407at2759"/>
<dbReference type="PhylomeDB" id="Q2QDE7"/>
<dbReference type="TreeFam" id="TF329541"/>
<dbReference type="Reactome" id="R-RNO-6798695">
    <property type="pathway name" value="Neutrophil degranulation"/>
</dbReference>
<dbReference type="PRO" id="PR:Q2QDE7"/>
<dbReference type="Proteomes" id="UP000002494">
    <property type="component" value="Chromosome X"/>
</dbReference>
<dbReference type="Bgee" id="ENSRNOG00000055641">
    <property type="expression patterns" value="Expressed in skeletal muscle tissue and 19 other cell types or tissues"/>
</dbReference>
<dbReference type="ExpressionAtlas" id="Q2QDE7">
    <property type="expression patterns" value="baseline and differential"/>
</dbReference>
<dbReference type="GO" id="GO:0005783">
    <property type="term" value="C:endoplasmic reticulum"/>
    <property type="evidence" value="ECO:0007669"/>
    <property type="project" value="UniProtKB-SubCell"/>
</dbReference>
<dbReference type="GO" id="GO:0005634">
    <property type="term" value="C:nucleus"/>
    <property type="evidence" value="ECO:0000318"/>
    <property type="project" value="GO_Central"/>
</dbReference>
<dbReference type="GO" id="GO:0004530">
    <property type="term" value="F:deoxyribonuclease I activity"/>
    <property type="evidence" value="ECO:0000318"/>
    <property type="project" value="GO_Central"/>
</dbReference>
<dbReference type="GO" id="GO:0003677">
    <property type="term" value="F:DNA binding"/>
    <property type="evidence" value="ECO:0000318"/>
    <property type="project" value="GO_Central"/>
</dbReference>
<dbReference type="GO" id="GO:0006308">
    <property type="term" value="P:DNA catabolic process"/>
    <property type="evidence" value="ECO:0000318"/>
    <property type="project" value="GO_Central"/>
</dbReference>
<dbReference type="CDD" id="cd10282">
    <property type="entry name" value="DNase1"/>
    <property type="match status" value="1"/>
</dbReference>
<dbReference type="Gene3D" id="3.60.10.10">
    <property type="entry name" value="Endonuclease/exonuclease/phosphatase"/>
    <property type="match status" value="1"/>
</dbReference>
<dbReference type="InterPro" id="IPR018057">
    <property type="entry name" value="Deoxyribonuclease-1_AS"/>
</dbReference>
<dbReference type="InterPro" id="IPR016202">
    <property type="entry name" value="DNase_I"/>
</dbReference>
<dbReference type="InterPro" id="IPR033125">
    <property type="entry name" value="DNASE_I_2"/>
</dbReference>
<dbReference type="InterPro" id="IPR036691">
    <property type="entry name" value="Endo/exonu/phosph_ase_sf"/>
</dbReference>
<dbReference type="InterPro" id="IPR005135">
    <property type="entry name" value="Endo/exonuclease/phosphatase"/>
</dbReference>
<dbReference type="PANTHER" id="PTHR11371">
    <property type="entry name" value="DEOXYRIBONUCLEASE"/>
    <property type="match status" value="1"/>
</dbReference>
<dbReference type="PANTHER" id="PTHR11371:SF28">
    <property type="entry name" value="DEOXYRIBONUCLEASE-1-LIKE 1"/>
    <property type="match status" value="1"/>
</dbReference>
<dbReference type="Pfam" id="PF03372">
    <property type="entry name" value="Exo_endo_phos"/>
    <property type="match status" value="1"/>
</dbReference>
<dbReference type="PIRSF" id="PIRSF000988">
    <property type="entry name" value="DNase_I_euk"/>
    <property type="match status" value="1"/>
</dbReference>
<dbReference type="PRINTS" id="PR00130">
    <property type="entry name" value="DNASEI"/>
</dbReference>
<dbReference type="SMART" id="SM00476">
    <property type="entry name" value="DNaseIc"/>
    <property type="match status" value="1"/>
</dbReference>
<dbReference type="SUPFAM" id="SSF56219">
    <property type="entry name" value="DNase I-like"/>
    <property type="match status" value="1"/>
</dbReference>
<dbReference type="PROSITE" id="PS00919">
    <property type="entry name" value="DNASE_I_1"/>
    <property type="match status" value="1"/>
</dbReference>
<dbReference type="PROSITE" id="PS00918">
    <property type="entry name" value="DNASE_I_2"/>
    <property type="match status" value="1"/>
</dbReference>
<keyword id="KW-1015">Disulfide bond</keyword>
<keyword id="KW-0255">Endonuclease</keyword>
<keyword id="KW-0256">Endoplasmic reticulum</keyword>
<keyword id="KW-0325">Glycoprotein</keyword>
<keyword id="KW-0378">Hydrolase</keyword>
<keyword id="KW-0540">Nuclease</keyword>
<keyword id="KW-1185">Reference proteome</keyword>
<keyword id="KW-0732">Signal</keyword>
<protein>
    <recommendedName>
        <fullName>Deoxyribonuclease-1-like 1</fullName>
        <ecNumber>3.1.21.-</ecNumber>
    </recommendedName>
    <alternativeName>
        <fullName>DNase X</fullName>
    </alternativeName>
    <alternativeName>
        <fullName>Deoxyribonuclease I-like 1</fullName>
        <shortName>DNase I-like 1</shortName>
    </alternativeName>
</protein>
<organism>
    <name type="scientific">Rattus norvegicus</name>
    <name type="common">Rat</name>
    <dbReference type="NCBI Taxonomy" id="10116"/>
    <lineage>
        <taxon>Eukaryota</taxon>
        <taxon>Metazoa</taxon>
        <taxon>Chordata</taxon>
        <taxon>Craniata</taxon>
        <taxon>Vertebrata</taxon>
        <taxon>Euteleostomi</taxon>
        <taxon>Mammalia</taxon>
        <taxon>Eutheria</taxon>
        <taxon>Euarchontoglires</taxon>
        <taxon>Glires</taxon>
        <taxon>Rodentia</taxon>
        <taxon>Myomorpha</taxon>
        <taxon>Muroidea</taxon>
        <taxon>Muridae</taxon>
        <taxon>Murinae</taxon>
        <taxon>Rattus</taxon>
    </lineage>
</organism>
<sequence>MPSGQPVFPRRVPDAYIAMRGLVVASLLILLVGGTDAFRICAFNAHRLTLTKVIKESVMDTLVQILARCDIMVLQEVVDSSQNTVLFLLQKLQSSKSYSFLNSSLLGRSTYKEKYVYIYRSDKTQVLNFYQYNDTEDIFAREPFVAQFTLPSKILPSVVLVPLHTTPKDVEKELNALYDVFLDVSQRWQNENVILLGDFNADCASLAKKRLNSLLLRTKAGFHWVIPDGEDTTVRASTNCTYDRIVMHGQGCQKLLKAAATFDFPRRFQLTEEEALRVSDHYPVEVELNKAAQGIPPHCLSTLLLLSLSQLG</sequence>
<feature type="signal peptide" evidence="2">
    <location>
        <begin position="1"/>
        <end position="35"/>
    </location>
</feature>
<feature type="chain" id="PRO_0000231034" description="Deoxyribonuclease-1-like 1">
    <location>
        <begin position="36"/>
        <end position="312"/>
    </location>
</feature>
<feature type="active site" evidence="1">
    <location>
        <position position="113"/>
    </location>
</feature>
<feature type="active site" evidence="1">
    <location>
        <position position="164"/>
    </location>
</feature>
<feature type="glycosylation site" description="N-linked (GlcNAc...) asparagine" evidence="2">
    <location>
        <position position="102"/>
    </location>
</feature>
<feature type="glycosylation site" description="N-linked (GlcNAc...) asparagine" evidence="2">
    <location>
        <position position="133"/>
    </location>
</feature>
<feature type="glycosylation site" description="N-linked (GlcNAc...) asparagine" evidence="2">
    <location>
        <position position="239"/>
    </location>
</feature>
<feature type="disulfide bond" description="Essential for enzymatic activity" evidence="1">
    <location>
        <begin position="203"/>
        <end position="240"/>
    </location>
</feature>
<accession>Q2QDE7</accession>